<proteinExistence type="evidence at transcript level"/>
<gene>
    <name type="primary">rnrB-1</name>
    <name type="synonym">nrdB</name>
    <name type="ORF">DDB_G0272616</name>
</gene>
<gene>
    <name type="primary">rnrB-2</name>
    <name type="synonym">nrdB</name>
    <name type="ORF">DDB_G0274021</name>
</gene>
<comment type="function">
    <text evidence="1">Provides the precursors necessary for DNA synthesis. Catalyzes the biosynthesis of deoxyribonucleotides from the corresponding ribonucleotides (By similarity).</text>
</comment>
<comment type="catalytic activity">
    <reaction evidence="2">
        <text>a 2'-deoxyribonucleoside 5'-diphosphate + [thioredoxin]-disulfide + H2O = a ribonucleoside 5'-diphosphate + [thioredoxin]-dithiol</text>
        <dbReference type="Rhea" id="RHEA:23252"/>
        <dbReference type="Rhea" id="RHEA-COMP:10698"/>
        <dbReference type="Rhea" id="RHEA-COMP:10700"/>
        <dbReference type="ChEBI" id="CHEBI:15377"/>
        <dbReference type="ChEBI" id="CHEBI:29950"/>
        <dbReference type="ChEBI" id="CHEBI:50058"/>
        <dbReference type="ChEBI" id="CHEBI:57930"/>
        <dbReference type="ChEBI" id="CHEBI:73316"/>
        <dbReference type="EC" id="1.17.4.1"/>
    </reaction>
</comment>
<comment type="cofactor">
    <cofactor evidence="1">
        <name>Fe cation</name>
        <dbReference type="ChEBI" id="CHEBI:24875"/>
    </cofactor>
    <text evidence="1">Binds 2 iron ions per subunit.</text>
</comment>
<comment type="subunit">
    <text evidence="1">Heterodimer of a large and a small subunit.</text>
</comment>
<comment type="subcellular location">
    <subcellularLocation>
        <location evidence="1">Cytoplasm</location>
    </subcellularLocation>
</comment>
<comment type="developmental stage">
    <text evidence="3">Expression is detected in growing cells and decreases dramatically at the onset of development. The rnrB transcript reappears after the cells have formed multicellular aggregates.</text>
</comment>
<comment type="similarity">
    <text evidence="4">Belongs to the ribonucleoside diphosphate reductase small chain family.</text>
</comment>
<comment type="caution">
    <text evidence="4">The gene for this protein is duplicated in strains AX3 and AX4. These strains contain a duplication of a segment of 750 kb of chromosome 2 compared to the corresponding sequence in strain AX2.</text>
</comment>
<feature type="chain" id="PRO_0000190456" description="Ribonucleoside-diphosphate reductase small subunit">
    <location>
        <begin position="1"/>
        <end position="338"/>
    </location>
</feature>
<feature type="active site" evidence="2">
    <location>
        <position position="119"/>
    </location>
</feature>
<feature type="binding site" evidence="2">
    <location>
        <position position="81"/>
    </location>
    <ligand>
        <name>Fe cation</name>
        <dbReference type="ChEBI" id="CHEBI:24875"/>
        <label>1</label>
    </ligand>
</feature>
<feature type="binding site" evidence="2">
    <location>
        <position position="112"/>
    </location>
    <ligand>
        <name>Fe cation</name>
        <dbReference type="ChEBI" id="CHEBI:24875"/>
        <label>1</label>
    </ligand>
</feature>
<feature type="binding site" evidence="1">
    <location>
        <position position="112"/>
    </location>
    <ligand>
        <name>Fe cation</name>
        <dbReference type="ChEBI" id="CHEBI:24875"/>
        <label>2</label>
    </ligand>
</feature>
<feature type="binding site" evidence="2">
    <location>
        <position position="115"/>
    </location>
    <ligand>
        <name>Fe cation</name>
        <dbReference type="ChEBI" id="CHEBI:24875"/>
        <label>1</label>
    </ligand>
</feature>
<feature type="binding site" evidence="1">
    <location>
        <position position="174"/>
    </location>
    <ligand>
        <name>Fe cation</name>
        <dbReference type="ChEBI" id="CHEBI:24875"/>
        <label>2</label>
    </ligand>
</feature>
<feature type="binding site" evidence="1">
    <location>
        <position position="208"/>
    </location>
    <ligand>
        <name>Fe cation</name>
        <dbReference type="ChEBI" id="CHEBI:24875"/>
        <label>2</label>
    </ligand>
</feature>
<feature type="binding site" evidence="1">
    <location>
        <position position="211"/>
    </location>
    <ligand>
        <name>Fe cation</name>
        <dbReference type="ChEBI" id="CHEBI:24875"/>
        <label>2</label>
    </ligand>
</feature>
<protein>
    <recommendedName>
        <fullName>Ribonucleoside-diphosphate reductase small subunit</fullName>
        <ecNumber>1.17.4.1</ecNumber>
    </recommendedName>
    <alternativeName>
        <fullName>Ribonucleotide reductase small subunit</fullName>
    </alternativeName>
</protein>
<reference key="1">
    <citation type="journal article" date="1996" name="Biochim. Biophys. Acta">
        <title>A prespore-specific gene of Dictyostelium discoideum encodes the small subunit of ribonucleotide reductase.</title>
        <authorList>
            <person name="Tsang A."/>
            <person name="Bonfils C."/>
            <person name="Czaika G."/>
            <person name="Shtevi A."/>
            <person name="Grant C."/>
        </authorList>
    </citation>
    <scope>NUCLEOTIDE SEQUENCE [GENOMIC DNA]</scope>
    <scope>DEVELOPMENTAL STAGE</scope>
</reference>
<reference key="2">
    <citation type="submission" date="2003-04" db="EMBL/GenBank/DDBJ databases">
        <authorList>
            <person name="Tsang A."/>
        </authorList>
    </citation>
    <scope>SEQUENCE REVISION TO 233-237</scope>
</reference>
<reference key="3">
    <citation type="journal article" date="2002" name="Nature">
        <title>Sequence and analysis of chromosome 2 of Dictyostelium discoideum.</title>
        <authorList>
            <person name="Gloeckner G."/>
            <person name="Eichinger L."/>
            <person name="Szafranski K."/>
            <person name="Pachebat J.A."/>
            <person name="Bankier A.T."/>
            <person name="Dear P.H."/>
            <person name="Lehmann R."/>
            <person name="Baumgart C."/>
            <person name="Parra G."/>
            <person name="Abril J.F."/>
            <person name="Guigo R."/>
            <person name="Kumpf K."/>
            <person name="Tunggal B."/>
            <person name="Cox E.C."/>
            <person name="Quail M.A."/>
            <person name="Platzer M."/>
            <person name="Rosenthal A."/>
            <person name="Noegel A.A."/>
        </authorList>
    </citation>
    <scope>NUCLEOTIDE SEQUENCE [LARGE SCALE GENOMIC DNA]</scope>
    <source>
        <strain>AX4</strain>
    </source>
</reference>
<reference key="4">
    <citation type="journal article" date="2005" name="Nature">
        <title>The genome of the social amoeba Dictyostelium discoideum.</title>
        <authorList>
            <person name="Eichinger L."/>
            <person name="Pachebat J.A."/>
            <person name="Gloeckner G."/>
            <person name="Rajandream M.A."/>
            <person name="Sucgang R."/>
            <person name="Berriman M."/>
            <person name="Song J."/>
            <person name="Olsen R."/>
            <person name="Szafranski K."/>
            <person name="Xu Q."/>
            <person name="Tunggal B."/>
            <person name="Kummerfeld S."/>
            <person name="Madera M."/>
            <person name="Konfortov B.A."/>
            <person name="Rivero F."/>
            <person name="Bankier A.T."/>
            <person name="Lehmann R."/>
            <person name="Hamlin N."/>
            <person name="Davies R."/>
            <person name="Gaudet P."/>
            <person name="Fey P."/>
            <person name="Pilcher K."/>
            <person name="Chen G."/>
            <person name="Saunders D."/>
            <person name="Sodergren E.J."/>
            <person name="Davis P."/>
            <person name="Kerhornou A."/>
            <person name="Nie X."/>
            <person name="Hall N."/>
            <person name="Anjard C."/>
            <person name="Hemphill L."/>
            <person name="Bason N."/>
            <person name="Farbrother P."/>
            <person name="Desany B."/>
            <person name="Just E."/>
            <person name="Morio T."/>
            <person name="Rost R."/>
            <person name="Churcher C.M."/>
            <person name="Cooper J."/>
            <person name="Haydock S."/>
            <person name="van Driessche N."/>
            <person name="Cronin A."/>
            <person name="Goodhead I."/>
            <person name="Muzny D.M."/>
            <person name="Mourier T."/>
            <person name="Pain A."/>
            <person name="Lu M."/>
            <person name="Harper D."/>
            <person name="Lindsay R."/>
            <person name="Hauser H."/>
            <person name="James K.D."/>
            <person name="Quiles M."/>
            <person name="Madan Babu M."/>
            <person name="Saito T."/>
            <person name="Buchrieser C."/>
            <person name="Wardroper A."/>
            <person name="Felder M."/>
            <person name="Thangavelu M."/>
            <person name="Johnson D."/>
            <person name="Knights A."/>
            <person name="Loulseged H."/>
            <person name="Mungall K.L."/>
            <person name="Oliver K."/>
            <person name="Price C."/>
            <person name="Quail M.A."/>
            <person name="Urushihara H."/>
            <person name="Hernandez J."/>
            <person name="Rabbinowitsch E."/>
            <person name="Steffen D."/>
            <person name="Sanders M."/>
            <person name="Ma J."/>
            <person name="Kohara Y."/>
            <person name="Sharp S."/>
            <person name="Simmonds M.N."/>
            <person name="Spiegler S."/>
            <person name="Tivey A."/>
            <person name="Sugano S."/>
            <person name="White B."/>
            <person name="Walker D."/>
            <person name="Woodward J.R."/>
            <person name="Winckler T."/>
            <person name="Tanaka Y."/>
            <person name="Shaulsky G."/>
            <person name="Schleicher M."/>
            <person name="Weinstock G.M."/>
            <person name="Rosenthal A."/>
            <person name="Cox E.C."/>
            <person name="Chisholm R.L."/>
            <person name="Gibbs R.A."/>
            <person name="Loomis W.F."/>
            <person name="Platzer M."/>
            <person name="Kay R.R."/>
            <person name="Williams J.G."/>
            <person name="Dear P.H."/>
            <person name="Noegel A.A."/>
            <person name="Barrell B.G."/>
            <person name="Kuspa A."/>
        </authorList>
    </citation>
    <scope>NUCLEOTIDE SEQUENCE [LARGE SCALE GENOMIC DNA]</scope>
    <source>
        <strain>AX4</strain>
    </source>
</reference>
<dbReference type="EC" id="1.17.4.1"/>
<dbReference type="EMBL" id="L36941">
    <property type="protein sequence ID" value="AAB72227.2"/>
    <property type="molecule type" value="Genomic_DNA"/>
</dbReference>
<dbReference type="EMBL" id="AAFI02000011">
    <property type="protein sequence ID" value="EAL70444.1"/>
    <property type="molecule type" value="Genomic_DNA"/>
</dbReference>
<dbReference type="EMBL" id="AAFI02000009">
    <property type="protein sequence ID" value="EAL70945.1"/>
    <property type="molecule type" value="Genomic_DNA"/>
</dbReference>
<dbReference type="RefSeq" id="XP_644369.1">
    <property type="nucleotide sequence ID" value="XM_639277.1"/>
</dbReference>
<dbReference type="RefSeq" id="XP_645045.1">
    <property type="nucleotide sequence ID" value="XM_639953.1"/>
</dbReference>
<dbReference type="SMR" id="P42521"/>
<dbReference type="FunCoup" id="P42521">
    <property type="interactions" value="289"/>
</dbReference>
<dbReference type="STRING" id="44689.P42521"/>
<dbReference type="PaxDb" id="44689-DDB0185062"/>
<dbReference type="EnsemblProtists" id="EAL70444">
    <property type="protein sequence ID" value="EAL70444"/>
    <property type="gene ID" value="DDB_G0274021"/>
</dbReference>
<dbReference type="EnsemblProtists" id="EAL70945">
    <property type="protein sequence ID" value="EAL70945"/>
    <property type="gene ID" value="DDB_G0272616"/>
</dbReference>
<dbReference type="GeneID" id="8618721"/>
<dbReference type="GeneID" id="8619255"/>
<dbReference type="KEGG" id="ddi:DDB_G0272616"/>
<dbReference type="KEGG" id="ddi:DDB_G0274021"/>
<dbReference type="dictyBase" id="DDB_G0272616">
    <property type="gene designation" value="rnrB-1"/>
</dbReference>
<dbReference type="dictyBase" id="DDB_G0274021">
    <property type="gene designation" value="rnrB-2"/>
</dbReference>
<dbReference type="VEuPathDB" id="AmoebaDB:DDB_G0274021"/>
<dbReference type="eggNOG" id="KOG1567">
    <property type="taxonomic scope" value="Eukaryota"/>
</dbReference>
<dbReference type="HOGENOM" id="CLU_035339_2_1_1"/>
<dbReference type="InParanoid" id="P42521"/>
<dbReference type="OMA" id="SNPFPWM"/>
<dbReference type="PhylomeDB" id="P42521"/>
<dbReference type="Reactome" id="R-DDI-499943">
    <property type="pathway name" value="Interconversion of nucleotide di- and triphosphates"/>
</dbReference>
<dbReference type="PRO" id="PR:P42521"/>
<dbReference type="Proteomes" id="UP000002195">
    <property type="component" value="Chromosome 2"/>
</dbReference>
<dbReference type="GO" id="GO:0005971">
    <property type="term" value="C:ribonucleoside-diphosphate reductase complex"/>
    <property type="evidence" value="ECO:0000314"/>
    <property type="project" value="dictyBase"/>
</dbReference>
<dbReference type="GO" id="GO:0046872">
    <property type="term" value="F:metal ion binding"/>
    <property type="evidence" value="ECO:0007669"/>
    <property type="project" value="UniProtKB-KW"/>
</dbReference>
<dbReference type="GO" id="GO:0004748">
    <property type="term" value="F:ribonucleoside-diphosphate reductase activity, thioredoxin disulfide as acceptor"/>
    <property type="evidence" value="ECO:0000314"/>
    <property type="project" value="dictyBase"/>
</dbReference>
<dbReference type="GO" id="GO:0009263">
    <property type="term" value="P:deoxyribonucleotide biosynthetic process"/>
    <property type="evidence" value="ECO:0000314"/>
    <property type="project" value="dictyBase"/>
</dbReference>
<dbReference type="GO" id="GO:0031288">
    <property type="term" value="P:sorocarp morphogenesis"/>
    <property type="evidence" value="ECO:0000315"/>
    <property type="project" value="dictyBase"/>
</dbReference>
<dbReference type="CDD" id="cd01049">
    <property type="entry name" value="RNRR2"/>
    <property type="match status" value="1"/>
</dbReference>
<dbReference type="Gene3D" id="1.10.620.20">
    <property type="entry name" value="Ribonucleotide Reductase, subunit A"/>
    <property type="match status" value="1"/>
</dbReference>
<dbReference type="InterPro" id="IPR009078">
    <property type="entry name" value="Ferritin-like_SF"/>
</dbReference>
<dbReference type="InterPro" id="IPR012348">
    <property type="entry name" value="RNR-like"/>
</dbReference>
<dbReference type="InterPro" id="IPR033909">
    <property type="entry name" value="RNR_small"/>
</dbReference>
<dbReference type="InterPro" id="IPR030475">
    <property type="entry name" value="RNR_small_AS"/>
</dbReference>
<dbReference type="InterPro" id="IPR000358">
    <property type="entry name" value="RNR_small_fam"/>
</dbReference>
<dbReference type="PANTHER" id="PTHR23409">
    <property type="entry name" value="RIBONUCLEOSIDE-DIPHOSPHATE REDUCTASE SMALL CHAIN"/>
    <property type="match status" value="1"/>
</dbReference>
<dbReference type="PANTHER" id="PTHR23409:SF18">
    <property type="entry name" value="RIBONUCLEOSIDE-DIPHOSPHATE REDUCTASE SUBUNIT M2"/>
    <property type="match status" value="1"/>
</dbReference>
<dbReference type="Pfam" id="PF00268">
    <property type="entry name" value="Ribonuc_red_sm"/>
    <property type="match status" value="1"/>
</dbReference>
<dbReference type="PIRSF" id="PIRSF000355">
    <property type="entry name" value="NrdB"/>
    <property type="match status" value="1"/>
</dbReference>
<dbReference type="SUPFAM" id="SSF47240">
    <property type="entry name" value="Ferritin-like"/>
    <property type="match status" value="1"/>
</dbReference>
<dbReference type="PROSITE" id="PS00368">
    <property type="entry name" value="RIBORED_SMALL"/>
    <property type="match status" value="1"/>
</dbReference>
<accession>P42521</accession>
<accession>Q556I9</accession>
<accession>Q86AN2</accession>
<name>RIR2_DICDI</name>
<evidence type="ECO:0000250" key="1"/>
<evidence type="ECO:0000255" key="2">
    <source>
        <dbReference type="PROSITE-ProRule" id="PRU10014"/>
    </source>
</evidence>
<evidence type="ECO:0000269" key="3">
    <source>
    </source>
</evidence>
<evidence type="ECO:0000305" key="4"/>
<sequence length="338" mass="39371">MEEINKKDTFIEPILKENKDRFVLFPIKYPDIWRMYKKALASHWVAEEIDLGNDNVDWEYKLTDNERHFISHVLAFFAASDGIVNENLATRFMSEVQIPEARCFYGFQIAIENIHSETYSLLIETYIKDKQTKDKLFNAIETIPCIKKKAEWALRWINDSDSFAERLVAFAAVEGIFFSGSFCSIFWLKKRGLMQGLTFSNELISRDEGLHCDFACLLYTKLQRKLDPKVIEKMIRDAVECEKEFICESLPVDLIGMNSRSMSQYIEFCADRLVVSLGYKKIFNSSNPFEWMEMISLQRKSNFFEGKVAEYAKTGVAIQGNNQQKNNQSRTLVLDEDF</sequence>
<keyword id="KW-0963">Cytoplasm</keyword>
<keyword id="KW-0215">Deoxyribonucleotide synthesis</keyword>
<keyword id="KW-0408">Iron</keyword>
<keyword id="KW-0479">Metal-binding</keyword>
<keyword id="KW-0560">Oxidoreductase</keyword>
<keyword id="KW-1185">Reference proteome</keyword>
<organism>
    <name type="scientific">Dictyostelium discoideum</name>
    <name type="common">Social amoeba</name>
    <dbReference type="NCBI Taxonomy" id="44689"/>
    <lineage>
        <taxon>Eukaryota</taxon>
        <taxon>Amoebozoa</taxon>
        <taxon>Evosea</taxon>
        <taxon>Eumycetozoa</taxon>
        <taxon>Dictyostelia</taxon>
        <taxon>Dictyosteliales</taxon>
        <taxon>Dictyosteliaceae</taxon>
        <taxon>Dictyostelium</taxon>
    </lineage>
</organism>